<evidence type="ECO:0000255" key="1">
    <source>
        <dbReference type="HAMAP-Rule" id="MF_00488"/>
    </source>
</evidence>
<sequence length="314" mass="34788">MKKGINRVVLVGTGAVGCSYAYCMINQAVAEEFVLVDVNEAKAEGEAMDLSHAVPFAPAPTRVWKGSYEDCKDADLVVITAGLPQKPGETRLDLVEKNAKIFKQIVRSIMDSGFDGIFLIATNPVDILTYVTWKESGLPKERVIGSGTTLDSARFRYMLGEYFNIGPHNIHAYIIGEHGDTELPVWSHVSVGIQKLQTLLEKDNTYNQEDLDKIFINVRDAAYHIIERKGATYYGIGMSLLRVTKAILNDENSVLTVSAYLEGQYGQKDVYIGVPAVLNRGGVREILEVELSEDEELKFDHSVQVLKETMAPVL</sequence>
<proteinExistence type="inferred from homology"/>
<keyword id="KW-0021">Allosteric enzyme</keyword>
<keyword id="KW-0963">Cytoplasm</keyword>
<keyword id="KW-0520">NAD</keyword>
<keyword id="KW-0560">Oxidoreductase</keyword>
<keyword id="KW-0597">Phosphoprotein</keyword>
<keyword id="KW-1185">Reference proteome</keyword>
<reference key="1">
    <citation type="journal article" date="2003" name="Nature">
        <title>The genome sequence of Bacillus anthracis Ames and comparison to closely related bacteria.</title>
        <authorList>
            <person name="Read T.D."/>
            <person name="Peterson S.N."/>
            <person name="Tourasse N.J."/>
            <person name="Baillie L.W."/>
            <person name="Paulsen I.T."/>
            <person name="Nelson K.E."/>
            <person name="Tettelin H."/>
            <person name="Fouts D.E."/>
            <person name="Eisen J.A."/>
            <person name="Gill S.R."/>
            <person name="Holtzapple E.K."/>
            <person name="Okstad O.A."/>
            <person name="Helgason E."/>
            <person name="Rilstone J."/>
            <person name="Wu M."/>
            <person name="Kolonay J.F."/>
            <person name="Beanan M.J."/>
            <person name="Dodson R.J."/>
            <person name="Brinkac L.M."/>
            <person name="Gwinn M.L."/>
            <person name="DeBoy R.T."/>
            <person name="Madpu R."/>
            <person name="Daugherty S.C."/>
            <person name="Durkin A.S."/>
            <person name="Haft D.H."/>
            <person name="Nelson W.C."/>
            <person name="Peterson J.D."/>
            <person name="Pop M."/>
            <person name="Khouri H.M."/>
            <person name="Radune D."/>
            <person name="Benton J.L."/>
            <person name="Mahamoud Y."/>
            <person name="Jiang L."/>
            <person name="Hance I.R."/>
            <person name="Weidman J.F."/>
            <person name="Berry K.J."/>
            <person name="Plaut R.D."/>
            <person name="Wolf A.M."/>
            <person name="Watkins K.L."/>
            <person name="Nierman W.C."/>
            <person name="Hazen A."/>
            <person name="Cline R.T."/>
            <person name="Redmond C."/>
            <person name="Thwaite J.E."/>
            <person name="White O."/>
            <person name="Salzberg S.L."/>
            <person name="Thomason B."/>
            <person name="Friedlander A.M."/>
            <person name="Koehler T.M."/>
            <person name="Hanna P.C."/>
            <person name="Kolstoe A.-B."/>
            <person name="Fraser C.M."/>
        </authorList>
    </citation>
    <scope>NUCLEOTIDE SEQUENCE [LARGE SCALE GENOMIC DNA]</scope>
    <source>
        <strain>Ames / isolate Porton</strain>
    </source>
</reference>
<reference key="2">
    <citation type="journal article" date="2009" name="J. Bacteriol.">
        <title>The complete genome sequence of Bacillus anthracis Ames 'Ancestor'.</title>
        <authorList>
            <person name="Ravel J."/>
            <person name="Jiang L."/>
            <person name="Stanley S.T."/>
            <person name="Wilson M.R."/>
            <person name="Decker R.S."/>
            <person name="Read T.D."/>
            <person name="Worsham P."/>
            <person name="Keim P.S."/>
            <person name="Salzberg S.L."/>
            <person name="Fraser-Liggett C.M."/>
            <person name="Rasko D.A."/>
        </authorList>
    </citation>
    <scope>NUCLEOTIDE SEQUENCE [LARGE SCALE GENOMIC DNA]</scope>
    <source>
        <strain>Ames ancestor</strain>
    </source>
</reference>
<reference key="3">
    <citation type="submission" date="2004-01" db="EMBL/GenBank/DDBJ databases">
        <title>Complete genome sequence of Bacillus anthracis Sterne.</title>
        <authorList>
            <person name="Brettin T.S."/>
            <person name="Bruce D."/>
            <person name="Challacombe J.F."/>
            <person name="Gilna P."/>
            <person name="Han C."/>
            <person name="Hill K."/>
            <person name="Hitchcock P."/>
            <person name="Jackson P."/>
            <person name="Keim P."/>
            <person name="Longmire J."/>
            <person name="Lucas S."/>
            <person name="Okinaka R."/>
            <person name="Richardson P."/>
            <person name="Rubin E."/>
            <person name="Tice H."/>
        </authorList>
    </citation>
    <scope>NUCLEOTIDE SEQUENCE [LARGE SCALE GENOMIC DNA]</scope>
    <source>
        <strain>Sterne</strain>
    </source>
</reference>
<gene>
    <name evidence="1" type="primary">ldh1</name>
    <name type="synonym">ldh-1</name>
    <name type="ordered locus">BA_1923</name>
    <name type="ordered locus">GBAA_1923</name>
    <name type="ordered locus">BAS1784</name>
</gene>
<comment type="function">
    <text evidence="1">Catalyzes the conversion of lactate to pyruvate.</text>
</comment>
<comment type="catalytic activity">
    <reaction evidence="1">
        <text>(S)-lactate + NAD(+) = pyruvate + NADH + H(+)</text>
        <dbReference type="Rhea" id="RHEA:23444"/>
        <dbReference type="ChEBI" id="CHEBI:15361"/>
        <dbReference type="ChEBI" id="CHEBI:15378"/>
        <dbReference type="ChEBI" id="CHEBI:16651"/>
        <dbReference type="ChEBI" id="CHEBI:57540"/>
        <dbReference type="ChEBI" id="CHEBI:57945"/>
        <dbReference type="EC" id="1.1.1.27"/>
    </reaction>
</comment>
<comment type="activity regulation">
    <text evidence="1">Allosterically activated by fructose 1,6-bisphosphate (FBP).</text>
</comment>
<comment type="pathway">
    <text evidence="1">Fermentation; pyruvate fermentation to lactate; (S)-lactate from pyruvate: step 1/1.</text>
</comment>
<comment type="subunit">
    <text evidence="1">Homotetramer.</text>
</comment>
<comment type="subcellular location">
    <subcellularLocation>
        <location evidence="1">Cytoplasm</location>
    </subcellularLocation>
</comment>
<comment type="similarity">
    <text evidence="1">Belongs to the LDH/MDH superfamily. LDH family.</text>
</comment>
<protein>
    <recommendedName>
        <fullName evidence="1">L-lactate dehydrogenase 1</fullName>
        <shortName evidence="1">L-LDH 1</shortName>
        <ecNumber evidence="1">1.1.1.27</ecNumber>
    </recommendedName>
</protein>
<name>LDH1_BACAN</name>
<accession>Q81RW4</accession>
<accession>Q6I040</accession>
<accession>Q6KU19</accession>
<feature type="chain" id="PRO_0000168313" description="L-lactate dehydrogenase 1">
    <location>
        <begin position="1"/>
        <end position="314"/>
    </location>
</feature>
<feature type="active site" description="Proton acceptor" evidence="1">
    <location>
        <position position="178"/>
    </location>
</feature>
<feature type="binding site" evidence="1">
    <location>
        <position position="16"/>
    </location>
    <ligand>
        <name>NAD(+)</name>
        <dbReference type="ChEBI" id="CHEBI:57540"/>
    </ligand>
</feature>
<feature type="binding site" evidence="1">
    <location>
        <position position="37"/>
    </location>
    <ligand>
        <name>NAD(+)</name>
        <dbReference type="ChEBI" id="CHEBI:57540"/>
    </ligand>
</feature>
<feature type="binding site" evidence="1">
    <location>
        <position position="42"/>
    </location>
    <ligand>
        <name>NAD(+)</name>
        <dbReference type="ChEBI" id="CHEBI:57540"/>
    </ligand>
</feature>
<feature type="binding site" evidence="1">
    <location>
        <position position="68"/>
    </location>
    <ligand>
        <name>NAD(+)</name>
        <dbReference type="ChEBI" id="CHEBI:57540"/>
    </ligand>
</feature>
<feature type="binding site" evidence="1">
    <location>
        <begin position="82"/>
        <end position="83"/>
    </location>
    <ligand>
        <name>NAD(+)</name>
        <dbReference type="ChEBI" id="CHEBI:57540"/>
    </ligand>
</feature>
<feature type="binding site" evidence="1">
    <location>
        <position position="85"/>
    </location>
    <ligand>
        <name>substrate</name>
    </ligand>
</feature>
<feature type="binding site" evidence="1">
    <location>
        <position position="91"/>
    </location>
    <ligand>
        <name>substrate</name>
    </ligand>
</feature>
<feature type="binding site" evidence="1">
    <location>
        <begin position="121"/>
        <end position="123"/>
    </location>
    <ligand>
        <name>NAD(+)</name>
        <dbReference type="ChEBI" id="CHEBI:57540"/>
    </ligand>
</feature>
<feature type="binding site" evidence="1">
    <location>
        <begin position="123"/>
        <end position="126"/>
    </location>
    <ligand>
        <name>substrate</name>
    </ligand>
</feature>
<feature type="binding site" evidence="1">
    <location>
        <position position="146"/>
    </location>
    <ligand>
        <name>NAD(+)</name>
        <dbReference type="ChEBI" id="CHEBI:57540"/>
    </ligand>
</feature>
<feature type="binding site" evidence="1">
    <location>
        <begin position="151"/>
        <end position="154"/>
    </location>
    <ligand>
        <name>substrate</name>
    </ligand>
</feature>
<feature type="binding site" evidence="1">
    <location>
        <position position="156"/>
    </location>
    <ligand>
        <name>beta-D-fructose 1,6-bisphosphate</name>
        <dbReference type="ChEBI" id="CHEBI:32966"/>
        <note>allosteric activator</note>
    </ligand>
</feature>
<feature type="binding site" evidence="1">
    <location>
        <position position="171"/>
    </location>
    <ligand>
        <name>beta-D-fructose 1,6-bisphosphate</name>
        <dbReference type="ChEBI" id="CHEBI:32966"/>
        <note>allosteric activator</note>
    </ligand>
</feature>
<feature type="binding site" evidence="1">
    <location>
        <position position="232"/>
    </location>
    <ligand>
        <name>substrate</name>
    </ligand>
</feature>
<feature type="modified residue" description="Phosphotyrosine" evidence="1">
    <location>
        <position position="223"/>
    </location>
</feature>
<organism>
    <name type="scientific">Bacillus anthracis</name>
    <dbReference type="NCBI Taxonomy" id="1392"/>
    <lineage>
        <taxon>Bacteria</taxon>
        <taxon>Bacillati</taxon>
        <taxon>Bacillota</taxon>
        <taxon>Bacilli</taxon>
        <taxon>Bacillales</taxon>
        <taxon>Bacillaceae</taxon>
        <taxon>Bacillus</taxon>
        <taxon>Bacillus cereus group</taxon>
    </lineage>
</organism>
<dbReference type="EC" id="1.1.1.27" evidence="1"/>
<dbReference type="EMBL" id="AE016879">
    <property type="protein sequence ID" value="AAP25818.1"/>
    <property type="molecule type" value="Genomic_DNA"/>
</dbReference>
<dbReference type="EMBL" id="AE017334">
    <property type="protein sequence ID" value="AAT31043.2"/>
    <property type="molecule type" value="Genomic_DNA"/>
</dbReference>
<dbReference type="EMBL" id="AE017225">
    <property type="protein sequence ID" value="AAT54099.1"/>
    <property type="molecule type" value="Genomic_DNA"/>
</dbReference>
<dbReference type="RefSeq" id="NP_844332.1">
    <property type="nucleotide sequence ID" value="NC_003997.3"/>
</dbReference>
<dbReference type="RefSeq" id="WP_000715326.1">
    <property type="nucleotide sequence ID" value="NZ_WXXJ01000007.1"/>
</dbReference>
<dbReference type="RefSeq" id="YP_028048.1">
    <property type="nucleotide sequence ID" value="NC_005945.1"/>
</dbReference>
<dbReference type="SMR" id="Q81RW4"/>
<dbReference type="STRING" id="261594.GBAA_1923"/>
<dbReference type="DNASU" id="1086286"/>
<dbReference type="KEGG" id="ban:BA_1923"/>
<dbReference type="KEGG" id="bar:GBAA_1923"/>
<dbReference type="KEGG" id="bat:BAS1784"/>
<dbReference type="PATRIC" id="fig|198094.11.peg.1896"/>
<dbReference type="eggNOG" id="COG0039">
    <property type="taxonomic scope" value="Bacteria"/>
</dbReference>
<dbReference type="HOGENOM" id="CLU_045401_1_1_9"/>
<dbReference type="OMA" id="EWDLDDY"/>
<dbReference type="OrthoDB" id="9802969at2"/>
<dbReference type="UniPathway" id="UPA00554">
    <property type="reaction ID" value="UER00611"/>
</dbReference>
<dbReference type="Proteomes" id="UP000000427">
    <property type="component" value="Chromosome"/>
</dbReference>
<dbReference type="Proteomes" id="UP000000594">
    <property type="component" value="Chromosome"/>
</dbReference>
<dbReference type="GO" id="GO:0005737">
    <property type="term" value="C:cytoplasm"/>
    <property type="evidence" value="ECO:0007669"/>
    <property type="project" value="UniProtKB-SubCell"/>
</dbReference>
<dbReference type="GO" id="GO:0004459">
    <property type="term" value="F:L-lactate dehydrogenase activity"/>
    <property type="evidence" value="ECO:0007669"/>
    <property type="project" value="UniProtKB-UniRule"/>
</dbReference>
<dbReference type="GO" id="GO:0006096">
    <property type="term" value="P:glycolytic process"/>
    <property type="evidence" value="ECO:0007669"/>
    <property type="project" value="UniProtKB-UniRule"/>
</dbReference>
<dbReference type="GO" id="GO:0006089">
    <property type="term" value="P:lactate metabolic process"/>
    <property type="evidence" value="ECO:0007669"/>
    <property type="project" value="TreeGrafter"/>
</dbReference>
<dbReference type="CDD" id="cd05291">
    <property type="entry name" value="HicDH_like"/>
    <property type="match status" value="1"/>
</dbReference>
<dbReference type="FunFam" id="3.90.110.10:FF:000005">
    <property type="entry name" value="L-lactate dehydrogenase"/>
    <property type="match status" value="1"/>
</dbReference>
<dbReference type="FunFam" id="3.40.50.720:FF:000018">
    <property type="entry name" value="Malate dehydrogenase"/>
    <property type="match status" value="1"/>
</dbReference>
<dbReference type="Gene3D" id="3.90.110.10">
    <property type="entry name" value="Lactate dehydrogenase/glycoside hydrolase, family 4, C-terminal"/>
    <property type="match status" value="1"/>
</dbReference>
<dbReference type="Gene3D" id="3.40.50.720">
    <property type="entry name" value="NAD(P)-binding Rossmann-like Domain"/>
    <property type="match status" value="1"/>
</dbReference>
<dbReference type="HAMAP" id="MF_00488">
    <property type="entry name" value="Lactate_dehydrog"/>
    <property type="match status" value="1"/>
</dbReference>
<dbReference type="InterPro" id="IPR001557">
    <property type="entry name" value="L-lactate/malate_DH"/>
</dbReference>
<dbReference type="InterPro" id="IPR011304">
    <property type="entry name" value="L-lactate_DH"/>
</dbReference>
<dbReference type="InterPro" id="IPR018177">
    <property type="entry name" value="L-lactate_DH_AS"/>
</dbReference>
<dbReference type="InterPro" id="IPR022383">
    <property type="entry name" value="Lactate/malate_DH_C"/>
</dbReference>
<dbReference type="InterPro" id="IPR001236">
    <property type="entry name" value="Lactate/malate_DH_N"/>
</dbReference>
<dbReference type="InterPro" id="IPR015955">
    <property type="entry name" value="Lactate_DH/Glyco_Ohase_4_C"/>
</dbReference>
<dbReference type="InterPro" id="IPR036291">
    <property type="entry name" value="NAD(P)-bd_dom_sf"/>
</dbReference>
<dbReference type="NCBIfam" id="TIGR01771">
    <property type="entry name" value="L-LDH-NAD"/>
    <property type="match status" value="1"/>
</dbReference>
<dbReference type="NCBIfam" id="NF000824">
    <property type="entry name" value="PRK00066.1"/>
    <property type="match status" value="1"/>
</dbReference>
<dbReference type="NCBIfam" id="NF004863">
    <property type="entry name" value="PRK06223.1"/>
    <property type="match status" value="1"/>
</dbReference>
<dbReference type="PANTHER" id="PTHR43128">
    <property type="entry name" value="L-2-HYDROXYCARBOXYLATE DEHYDROGENASE (NAD(P)(+))"/>
    <property type="match status" value="1"/>
</dbReference>
<dbReference type="PANTHER" id="PTHR43128:SF16">
    <property type="entry name" value="L-LACTATE DEHYDROGENASE"/>
    <property type="match status" value="1"/>
</dbReference>
<dbReference type="Pfam" id="PF02866">
    <property type="entry name" value="Ldh_1_C"/>
    <property type="match status" value="1"/>
</dbReference>
<dbReference type="Pfam" id="PF00056">
    <property type="entry name" value="Ldh_1_N"/>
    <property type="match status" value="1"/>
</dbReference>
<dbReference type="PIRSF" id="PIRSF000102">
    <property type="entry name" value="Lac_mal_DH"/>
    <property type="match status" value="1"/>
</dbReference>
<dbReference type="PRINTS" id="PR00086">
    <property type="entry name" value="LLDHDRGNASE"/>
</dbReference>
<dbReference type="SUPFAM" id="SSF56327">
    <property type="entry name" value="LDH C-terminal domain-like"/>
    <property type="match status" value="1"/>
</dbReference>
<dbReference type="SUPFAM" id="SSF51735">
    <property type="entry name" value="NAD(P)-binding Rossmann-fold domains"/>
    <property type="match status" value="1"/>
</dbReference>
<dbReference type="PROSITE" id="PS00064">
    <property type="entry name" value="L_LDH"/>
    <property type="match status" value="1"/>
</dbReference>